<organism>
    <name type="scientific">Gallus gallus</name>
    <name type="common">Chicken</name>
    <dbReference type="NCBI Taxonomy" id="9031"/>
    <lineage>
        <taxon>Eukaryota</taxon>
        <taxon>Metazoa</taxon>
        <taxon>Chordata</taxon>
        <taxon>Craniata</taxon>
        <taxon>Vertebrata</taxon>
        <taxon>Euteleostomi</taxon>
        <taxon>Archelosauria</taxon>
        <taxon>Archosauria</taxon>
        <taxon>Dinosauria</taxon>
        <taxon>Saurischia</taxon>
        <taxon>Theropoda</taxon>
        <taxon>Coelurosauria</taxon>
        <taxon>Aves</taxon>
        <taxon>Neognathae</taxon>
        <taxon>Galloanserae</taxon>
        <taxon>Galliformes</taxon>
        <taxon>Phasianidae</taxon>
        <taxon>Phasianinae</taxon>
        <taxon>Gallus</taxon>
    </lineage>
</organism>
<sequence>MAAKVFESIGKFGLGLAVAGGVVNSALYNVDAGHRAVIFDRFRGVQDTVVGEGTHFLIPWVQKPIIFDCRSRPRNIPVITGSKDLQNVNITLRILFRPVTAQLPRIFTSIGEDYDERVLPSITTEILKSVVARFDAGELITQRELVSRQVSEDLTERAATFGLILDDVSLTHLTFGKEFTEAVEMKQVAQQEAERARFIVEKAEQQKKAAVISAEGDSKAAELIANSLATAGDGLIELRKLEAAEDIAYQLSRSRNITYLPSGQSVLLQLPQ</sequence>
<name>PHB1_CHICK</name>
<accession>P84173</accession>
<reference evidence="6" key="1">
    <citation type="submission" date="2004-04" db="EMBL/GenBank/DDBJ databases">
        <authorList>
            <person name="Boardman P.E."/>
            <person name="Bonfield J.K."/>
            <person name="Brown W.R.A."/>
            <person name="Carder C."/>
            <person name="Chalk S.E."/>
            <person name="Croning M.D.R."/>
            <person name="Davies R.M."/>
            <person name="Francis M.D."/>
            <person name="Grafham D.V."/>
            <person name="Hubbard S.J."/>
            <person name="Humphray S.J."/>
            <person name="Hunt P.J."/>
            <person name="Maddison M."/>
            <person name="McLaren S.R."/>
            <person name="Niblett D."/>
            <person name="Overton I.M."/>
            <person name="Rogers J."/>
            <person name="Scott C.E."/>
            <person name="Taylor R.G."/>
            <person name="Tickle C."/>
            <person name="Wilson S.A."/>
        </authorList>
    </citation>
    <scope>NUCLEOTIDE SEQUENCE [LARGE SCALE MRNA]</scope>
    <source>
        <strain>White Leghorn Hisex</strain>
        <tissue>Trunk</tissue>
    </source>
</reference>
<reference evidence="6" key="2">
    <citation type="journal article" date="2005" name="Proteomics">
        <title>Proteomic analysis of the Gallus gallus embryo at stage-29 of development.</title>
        <authorList>
            <person name="Agudo D."/>
            <person name="Gomez-Esquer F."/>
            <person name="Diaz-Gil G."/>
            <person name="Martinez-Arribas F."/>
            <person name="Delcan J."/>
            <person name="Schneider J."/>
            <person name="Palomar M.A."/>
            <person name="Linares R."/>
        </authorList>
    </citation>
    <scope>IDENTIFICATION</scope>
    <scope>MASS SPECTROMETRY</scope>
    <source>
        <tissue evidence="5">Embryo</tissue>
    </source>
</reference>
<feature type="chain" id="PRO_0000223490" description="Prohibitin 1" evidence="6">
    <location>
        <begin position="1"/>
        <end position="272"/>
    </location>
</feature>
<feature type="coiled-coil region" evidence="4">
    <location>
        <begin position="177"/>
        <end position="211"/>
    </location>
</feature>
<gene>
    <name type="primary">PHB1</name>
    <name evidence="3" type="synonym">PHB</name>
</gene>
<evidence type="ECO:0000250" key="1">
    <source>
        <dbReference type="UniProtKB" id="P35232"/>
    </source>
</evidence>
<evidence type="ECO:0000250" key="2">
    <source>
        <dbReference type="UniProtKB" id="P67778"/>
    </source>
</evidence>
<evidence type="ECO:0000250" key="3">
    <source>
        <dbReference type="UniProtKB" id="P67779"/>
    </source>
</evidence>
<evidence type="ECO:0000255" key="4"/>
<evidence type="ECO:0000269" key="5">
    <source>
    </source>
</evidence>
<evidence type="ECO:0000305" key="6"/>
<comment type="function">
    <text evidence="1">Protein with pleiotropic attributes mediated in a cell-compartment- and tissue-specific manner, which include the plasma membrane-associated cell signaling functions, mitochondrial chaperone, and transcriptional co-regulator of transcription factors in the nucleus.</text>
</comment>
<comment type="function">
    <text evidence="1">In the mitochondria, together with PHB2, forms large ring complexes (prohibitin complexes) in the inner mitochondrial membrane (IMM) and functions as a chaperone protein that stabilizes mitochondrial respiratory enzymes and maintains mitochondrial integrity in the IMM, which is required for mitochondrial morphogenesis, neuronal survival, and normal lifespan.</text>
</comment>
<comment type="function">
    <text evidence="1">In the nucleus, acts as a transcription coregulator, enhances promoter binding by TP53, a transcription factor it activates, but reduces the promoter binding by E2F1, a transcription factor it represses.</text>
</comment>
<comment type="function">
    <text evidence="2">In the plasma membrane, cooperates with CD86 to mediate CD86-signaling in B lymphocytes that regulates the level of IgG1 produced through the activation of distal signaling intermediates. Upon CD40 engagement, required to activate NF-kappa-B signaling pathway via phospholipase C and protein kinase C activation.</text>
</comment>
<comment type="subunit">
    <text evidence="1">The mitochondrial prohibitin complex consists of two subunits (PHB1 and PHB2), assembled into a membrane-associated ring-shaped supercomplex of approximately 1 mDa.</text>
</comment>
<comment type="interaction">
    <interactant intactId="EBI-1636878">
        <id>P84173</id>
    </interactant>
    <interactant intactId="EBI-1635766">
        <id>Q8AYS8</id>
        <label>KCNMA1</label>
    </interactant>
    <organismsDiffer>false</organismsDiffer>
    <experiments>3</experiments>
</comment>
<comment type="subcellular location">
    <subcellularLocation>
        <location evidence="1">Mitochondrion inner membrane</location>
    </subcellularLocation>
    <subcellularLocation>
        <location evidence="1">Nucleus</location>
    </subcellularLocation>
    <subcellularLocation>
        <location evidence="1">Cytoplasm</location>
    </subcellularLocation>
    <subcellularLocation>
        <location evidence="1">Cell membrane</location>
    </subcellularLocation>
</comment>
<comment type="mass spectrometry"/>
<comment type="similarity">
    <text evidence="4">Belongs to the prohibitin family.</text>
</comment>
<proteinExistence type="evidence at protein level"/>
<dbReference type="EMBL" id="CR387706">
    <property type="status" value="NOT_ANNOTATED_CDS"/>
    <property type="molecule type" value="mRNA"/>
</dbReference>
<dbReference type="SMR" id="P84173"/>
<dbReference type="FunCoup" id="P84173">
    <property type="interactions" value="2785"/>
</dbReference>
<dbReference type="IntAct" id="P84173">
    <property type="interactions" value="1"/>
</dbReference>
<dbReference type="STRING" id="9031.ENSGALP00000061263"/>
<dbReference type="PaxDb" id="9031-ENSGALP00000001750"/>
<dbReference type="Ensembl" id="ENSGALT00010059518.1">
    <property type="protein sequence ID" value="ENSGALP00010036340.1"/>
    <property type="gene ID" value="ENSGALG00010024398.1"/>
</dbReference>
<dbReference type="VEuPathDB" id="HostDB:geneid_419980"/>
<dbReference type="eggNOG" id="KOG3083">
    <property type="taxonomic scope" value="Eukaryota"/>
</dbReference>
<dbReference type="GeneTree" id="ENSGT00950000183070"/>
<dbReference type="HOGENOM" id="CLU_047969_0_0_1"/>
<dbReference type="InParanoid" id="P84173"/>
<dbReference type="PhylomeDB" id="P84173"/>
<dbReference type="PRO" id="PR:P84173"/>
<dbReference type="Proteomes" id="UP000000539">
    <property type="component" value="Chromosome 27"/>
</dbReference>
<dbReference type="GO" id="GO:0009986">
    <property type="term" value="C:cell surface"/>
    <property type="evidence" value="ECO:0000250"/>
    <property type="project" value="UniProtKB"/>
</dbReference>
<dbReference type="GO" id="GO:0005737">
    <property type="term" value="C:cytoplasm"/>
    <property type="evidence" value="ECO:0000250"/>
    <property type="project" value="UniProtKB"/>
</dbReference>
<dbReference type="GO" id="GO:0005743">
    <property type="term" value="C:mitochondrial inner membrane"/>
    <property type="evidence" value="ECO:0000250"/>
    <property type="project" value="UniProtKB"/>
</dbReference>
<dbReference type="GO" id="GO:0035632">
    <property type="term" value="C:mitochondrial prohibitin complex"/>
    <property type="evidence" value="ECO:0000250"/>
    <property type="project" value="UniProtKB"/>
</dbReference>
<dbReference type="GO" id="GO:0005739">
    <property type="term" value="C:mitochondrion"/>
    <property type="evidence" value="ECO:0000250"/>
    <property type="project" value="UniProtKB"/>
</dbReference>
<dbReference type="GO" id="GO:0005634">
    <property type="term" value="C:nucleus"/>
    <property type="evidence" value="ECO:0000250"/>
    <property type="project" value="UniProtKB"/>
</dbReference>
<dbReference type="GO" id="GO:0005886">
    <property type="term" value="C:plasma membrane"/>
    <property type="evidence" value="ECO:0000250"/>
    <property type="project" value="UniProtKB"/>
</dbReference>
<dbReference type="GO" id="GO:0071897">
    <property type="term" value="P:DNA biosynthetic process"/>
    <property type="evidence" value="ECO:0007669"/>
    <property type="project" value="UniProtKB-KW"/>
</dbReference>
<dbReference type="GO" id="GO:0007005">
    <property type="term" value="P:mitochondrion organization"/>
    <property type="evidence" value="ECO:0000318"/>
    <property type="project" value="GO_Central"/>
</dbReference>
<dbReference type="CDD" id="cd03401">
    <property type="entry name" value="SPFH_prohibitin"/>
    <property type="match status" value="1"/>
</dbReference>
<dbReference type="FunFam" id="3.30.479.30:FF:000001">
    <property type="entry name" value="Prohibitin 2"/>
    <property type="match status" value="1"/>
</dbReference>
<dbReference type="Gene3D" id="3.30.479.30">
    <property type="entry name" value="Band 7 domain"/>
    <property type="match status" value="1"/>
</dbReference>
<dbReference type="InterPro" id="IPR001107">
    <property type="entry name" value="Band_7"/>
</dbReference>
<dbReference type="InterPro" id="IPR036013">
    <property type="entry name" value="Band_7/SPFH_dom_sf"/>
</dbReference>
<dbReference type="InterPro" id="IPR000163">
    <property type="entry name" value="Prohibitin"/>
</dbReference>
<dbReference type="PANTHER" id="PTHR23222">
    <property type="entry name" value="PROHIBITIN"/>
    <property type="match status" value="1"/>
</dbReference>
<dbReference type="PANTHER" id="PTHR23222:SF0">
    <property type="entry name" value="PROHIBITIN 1"/>
    <property type="match status" value="1"/>
</dbReference>
<dbReference type="Pfam" id="PF01145">
    <property type="entry name" value="Band_7"/>
    <property type="match status" value="1"/>
</dbReference>
<dbReference type="PRINTS" id="PR00679">
    <property type="entry name" value="PROHIBITIN"/>
</dbReference>
<dbReference type="SMART" id="SM00244">
    <property type="entry name" value="PHB"/>
    <property type="match status" value="1"/>
</dbReference>
<dbReference type="SUPFAM" id="SSF117892">
    <property type="entry name" value="Band 7/SPFH domain"/>
    <property type="match status" value="1"/>
</dbReference>
<keyword id="KW-1003">Cell membrane</keyword>
<keyword id="KW-0175">Coiled coil</keyword>
<keyword id="KW-0963">Cytoplasm</keyword>
<keyword id="KW-0237">DNA synthesis</keyword>
<keyword id="KW-0472">Membrane</keyword>
<keyword id="KW-0496">Mitochondrion</keyword>
<keyword id="KW-0999">Mitochondrion inner membrane</keyword>
<keyword id="KW-0539">Nucleus</keyword>
<keyword id="KW-1185">Reference proteome</keyword>
<protein>
    <recommendedName>
        <fullName>Prohibitin 1</fullName>
    </recommendedName>
</protein>